<protein>
    <recommendedName>
        <fullName evidence="1">Small ribosomal subunit protein bS20</fullName>
    </recommendedName>
    <alternativeName>
        <fullName evidence="3">30S ribosomal protein S20</fullName>
    </alternativeName>
</protein>
<reference key="1">
    <citation type="journal article" date="2010" name="Stand. Genomic Sci.">
        <title>Complete genome sequence of Rhizobium leguminosarum bv trifolii strain WSM2304, an effective microsymbiont of the South American clover Trifolium polymorphum.</title>
        <authorList>
            <person name="Reeve W."/>
            <person name="O'Hara G."/>
            <person name="Chain P."/>
            <person name="Ardley J."/>
            <person name="Brau L."/>
            <person name="Nandesena K."/>
            <person name="Tiwari R."/>
            <person name="Malfatti S."/>
            <person name="Kiss H."/>
            <person name="Lapidus A."/>
            <person name="Copeland A."/>
            <person name="Nolan M."/>
            <person name="Land M."/>
            <person name="Ivanova N."/>
            <person name="Mavromatis K."/>
            <person name="Markowitz V."/>
            <person name="Kyrpides N."/>
            <person name="Melino V."/>
            <person name="Denton M."/>
            <person name="Yates R."/>
            <person name="Howieson J."/>
        </authorList>
    </citation>
    <scope>NUCLEOTIDE SEQUENCE [LARGE SCALE GENOMIC DNA]</scope>
    <source>
        <strain>WSM2304</strain>
    </source>
</reference>
<feature type="chain" id="PRO_1000126501" description="Small ribosomal subunit protein bS20">
    <location>
        <begin position="1"/>
        <end position="92"/>
    </location>
</feature>
<feature type="region of interest" description="Disordered" evidence="2">
    <location>
        <begin position="1"/>
        <end position="23"/>
    </location>
</feature>
<dbReference type="EMBL" id="CP001191">
    <property type="protein sequence ID" value="ACI57628.1"/>
    <property type="molecule type" value="Genomic_DNA"/>
</dbReference>
<dbReference type="RefSeq" id="WP_003556028.1">
    <property type="nucleotide sequence ID" value="NC_011369.1"/>
</dbReference>
<dbReference type="SMR" id="B5ZYL1"/>
<dbReference type="STRING" id="395492.Rleg2_4370"/>
<dbReference type="GeneID" id="84667938"/>
<dbReference type="KEGG" id="rlt:Rleg2_4370"/>
<dbReference type="eggNOG" id="COG0268">
    <property type="taxonomic scope" value="Bacteria"/>
</dbReference>
<dbReference type="HOGENOM" id="CLU_160655_3_0_5"/>
<dbReference type="Proteomes" id="UP000008330">
    <property type="component" value="Chromosome"/>
</dbReference>
<dbReference type="GO" id="GO:0005829">
    <property type="term" value="C:cytosol"/>
    <property type="evidence" value="ECO:0007669"/>
    <property type="project" value="TreeGrafter"/>
</dbReference>
<dbReference type="GO" id="GO:0015935">
    <property type="term" value="C:small ribosomal subunit"/>
    <property type="evidence" value="ECO:0007669"/>
    <property type="project" value="TreeGrafter"/>
</dbReference>
<dbReference type="GO" id="GO:0070181">
    <property type="term" value="F:small ribosomal subunit rRNA binding"/>
    <property type="evidence" value="ECO:0007669"/>
    <property type="project" value="TreeGrafter"/>
</dbReference>
<dbReference type="GO" id="GO:0003735">
    <property type="term" value="F:structural constituent of ribosome"/>
    <property type="evidence" value="ECO:0007669"/>
    <property type="project" value="InterPro"/>
</dbReference>
<dbReference type="GO" id="GO:0006412">
    <property type="term" value="P:translation"/>
    <property type="evidence" value="ECO:0007669"/>
    <property type="project" value="UniProtKB-UniRule"/>
</dbReference>
<dbReference type="FunFam" id="1.20.58.110:FF:000001">
    <property type="entry name" value="30S ribosomal protein S20"/>
    <property type="match status" value="1"/>
</dbReference>
<dbReference type="Gene3D" id="1.20.58.110">
    <property type="entry name" value="Ribosomal protein S20"/>
    <property type="match status" value="1"/>
</dbReference>
<dbReference type="HAMAP" id="MF_00500">
    <property type="entry name" value="Ribosomal_bS20"/>
    <property type="match status" value="1"/>
</dbReference>
<dbReference type="InterPro" id="IPR002583">
    <property type="entry name" value="Ribosomal_bS20"/>
</dbReference>
<dbReference type="InterPro" id="IPR036510">
    <property type="entry name" value="Ribosomal_bS20_sf"/>
</dbReference>
<dbReference type="NCBIfam" id="TIGR00029">
    <property type="entry name" value="S20"/>
    <property type="match status" value="1"/>
</dbReference>
<dbReference type="PANTHER" id="PTHR33398">
    <property type="entry name" value="30S RIBOSOMAL PROTEIN S20"/>
    <property type="match status" value="1"/>
</dbReference>
<dbReference type="PANTHER" id="PTHR33398:SF1">
    <property type="entry name" value="SMALL RIBOSOMAL SUBUNIT PROTEIN BS20C"/>
    <property type="match status" value="1"/>
</dbReference>
<dbReference type="Pfam" id="PF01649">
    <property type="entry name" value="Ribosomal_S20p"/>
    <property type="match status" value="1"/>
</dbReference>
<dbReference type="SUPFAM" id="SSF46992">
    <property type="entry name" value="Ribosomal protein S20"/>
    <property type="match status" value="1"/>
</dbReference>
<keyword id="KW-1185">Reference proteome</keyword>
<keyword id="KW-0687">Ribonucleoprotein</keyword>
<keyword id="KW-0689">Ribosomal protein</keyword>
<keyword id="KW-0694">RNA-binding</keyword>
<keyword id="KW-0699">rRNA-binding</keyword>
<gene>
    <name evidence="1" type="primary">rpsT</name>
    <name type="ordered locus">Rleg2_4370</name>
</gene>
<proteinExistence type="inferred from homology"/>
<organism>
    <name type="scientific">Rhizobium leguminosarum bv. trifolii (strain WSM2304)</name>
    <dbReference type="NCBI Taxonomy" id="395492"/>
    <lineage>
        <taxon>Bacteria</taxon>
        <taxon>Pseudomonadati</taxon>
        <taxon>Pseudomonadota</taxon>
        <taxon>Alphaproteobacteria</taxon>
        <taxon>Hyphomicrobiales</taxon>
        <taxon>Rhizobiaceae</taxon>
        <taxon>Rhizobium/Agrobacterium group</taxon>
        <taxon>Rhizobium</taxon>
    </lineage>
</organism>
<accession>B5ZYL1</accession>
<evidence type="ECO:0000255" key="1">
    <source>
        <dbReference type="HAMAP-Rule" id="MF_00500"/>
    </source>
</evidence>
<evidence type="ECO:0000256" key="2">
    <source>
        <dbReference type="SAM" id="MobiDB-lite"/>
    </source>
</evidence>
<evidence type="ECO:0000305" key="3"/>
<sequence length="92" mass="9833">MANTTSAKKATRKIARRTDVNKARRSRVRTFVRQVEEAIASGDAAKAKEAFLAAQPELARAASKGVLHANTASRKVSRLAARVKALSVTTTA</sequence>
<comment type="function">
    <text evidence="1">Binds directly to 16S ribosomal RNA.</text>
</comment>
<comment type="similarity">
    <text evidence="1">Belongs to the bacterial ribosomal protein bS20 family.</text>
</comment>
<name>RS20_RHILW</name>